<evidence type="ECO:0000255" key="1">
    <source>
        <dbReference type="HAMAP-Rule" id="MF_00255"/>
    </source>
</evidence>
<dbReference type="EC" id="6.1.1.14" evidence="1"/>
<dbReference type="EMBL" id="CP001661">
    <property type="protein sequence ID" value="ACT16730.1"/>
    <property type="molecule type" value="Genomic_DNA"/>
</dbReference>
<dbReference type="SMR" id="C6E0B4"/>
<dbReference type="STRING" id="443144.GM21_0656"/>
<dbReference type="KEGG" id="gem:GM21_0656"/>
<dbReference type="eggNOG" id="COG0751">
    <property type="taxonomic scope" value="Bacteria"/>
</dbReference>
<dbReference type="HOGENOM" id="CLU_007220_2_2_7"/>
<dbReference type="OrthoDB" id="9775440at2"/>
<dbReference type="GO" id="GO:0005829">
    <property type="term" value="C:cytosol"/>
    <property type="evidence" value="ECO:0007669"/>
    <property type="project" value="TreeGrafter"/>
</dbReference>
<dbReference type="GO" id="GO:0004814">
    <property type="term" value="F:arginine-tRNA ligase activity"/>
    <property type="evidence" value="ECO:0007669"/>
    <property type="project" value="InterPro"/>
</dbReference>
<dbReference type="GO" id="GO:0005524">
    <property type="term" value="F:ATP binding"/>
    <property type="evidence" value="ECO:0007669"/>
    <property type="project" value="UniProtKB-UniRule"/>
</dbReference>
<dbReference type="GO" id="GO:0004820">
    <property type="term" value="F:glycine-tRNA ligase activity"/>
    <property type="evidence" value="ECO:0007669"/>
    <property type="project" value="UniProtKB-UniRule"/>
</dbReference>
<dbReference type="GO" id="GO:0006420">
    <property type="term" value="P:arginyl-tRNA aminoacylation"/>
    <property type="evidence" value="ECO:0007669"/>
    <property type="project" value="InterPro"/>
</dbReference>
<dbReference type="GO" id="GO:0006426">
    <property type="term" value="P:glycyl-tRNA aminoacylation"/>
    <property type="evidence" value="ECO:0007669"/>
    <property type="project" value="UniProtKB-UniRule"/>
</dbReference>
<dbReference type="HAMAP" id="MF_00255">
    <property type="entry name" value="Gly_tRNA_synth_beta"/>
    <property type="match status" value="1"/>
</dbReference>
<dbReference type="InterPro" id="IPR008909">
    <property type="entry name" value="DALR_anticod-bd"/>
</dbReference>
<dbReference type="InterPro" id="IPR015944">
    <property type="entry name" value="Gly-tRNA-synth_bsu"/>
</dbReference>
<dbReference type="InterPro" id="IPR006194">
    <property type="entry name" value="Gly-tRNA-synth_heterodimer"/>
</dbReference>
<dbReference type="NCBIfam" id="TIGR00211">
    <property type="entry name" value="glyS"/>
    <property type="match status" value="1"/>
</dbReference>
<dbReference type="PANTHER" id="PTHR30075:SF2">
    <property type="entry name" value="GLYCINE--TRNA LIGASE, CHLOROPLASTIC_MITOCHONDRIAL 2"/>
    <property type="match status" value="1"/>
</dbReference>
<dbReference type="PANTHER" id="PTHR30075">
    <property type="entry name" value="GLYCYL-TRNA SYNTHETASE"/>
    <property type="match status" value="1"/>
</dbReference>
<dbReference type="Pfam" id="PF05746">
    <property type="entry name" value="DALR_1"/>
    <property type="match status" value="1"/>
</dbReference>
<dbReference type="Pfam" id="PF02092">
    <property type="entry name" value="tRNA_synt_2f"/>
    <property type="match status" value="1"/>
</dbReference>
<dbReference type="PRINTS" id="PR01045">
    <property type="entry name" value="TRNASYNTHGB"/>
</dbReference>
<dbReference type="SUPFAM" id="SSF109604">
    <property type="entry name" value="HD-domain/PDEase-like"/>
    <property type="match status" value="1"/>
</dbReference>
<dbReference type="PROSITE" id="PS50861">
    <property type="entry name" value="AA_TRNA_LIGASE_II_GLYAB"/>
    <property type="match status" value="1"/>
</dbReference>
<reference key="1">
    <citation type="submission" date="2009-07" db="EMBL/GenBank/DDBJ databases">
        <title>Complete sequence of Geobacter sp. M21.</title>
        <authorList>
            <consortium name="US DOE Joint Genome Institute"/>
            <person name="Lucas S."/>
            <person name="Copeland A."/>
            <person name="Lapidus A."/>
            <person name="Glavina del Rio T."/>
            <person name="Dalin E."/>
            <person name="Tice H."/>
            <person name="Bruce D."/>
            <person name="Goodwin L."/>
            <person name="Pitluck S."/>
            <person name="Saunders E."/>
            <person name="Brettin T."/>
            <person name="Detter J.C."/>
            <person name="Han C."/>
            <person name="Larimer F."/>
            <person name="Land M."/>
            <person name="Hauser L."/>
            <person name="Kyrpides N."/>
            <person name="Ovchinnikova G."/>
            <person name="Lovley D."/>
        </authorList>
    </citation>
    <scope>NUCLEOTIDE SEQUENCE [LARGE SCALE GENOMIC DNA]</scope>
    <source>
        <strain>M21</strain>
    </source>
</reference>
<feature type="chain" id="PRO_1000204605" description="Glycine--tRNA ligase beta subunit">
    <location>
        <begin position="1"/>
        <end position="687"/>
    </location>
</feature>
<keyword id="KW-0030">Aminoacyl-tRNA synthetase</keyword>
<keyword id="KW-0067">ATP-binding</keyword>
<keyword id="KW-0963">Cytoplasm</keyword>
<keyword id="KW-0436">Ligase</keyword>
<keyword id="KW-0547">Nucleotide-binding</keyword>
<keyword id="KW-0648">Protein biosynthesis</keyword>
<organism>
    <name type="scientific">Geobacter sp. (strain M21)</name>
    <dbReference type="NCBI Taxonomy" id="443144"/>
    <lineage>
        <taxon>Bacteria</taxon>
        <taxon>Pseudomonadati</taxon>
        <taxon>Thermodesulfobacteriota</taxon>
        <taxon>Desulfuromonadia</taxon>
        <taxon>Geobacterales</taxon>
        <taxon>Geobacteraceae</taxon>
        <taxon>Geobacter</taxon>
    </lineage>
</organism>
<sequence length="687" mass="75808">MAKDLFLEIGCEEIPAGFVPKAMADMELLIKKEFDSARIEYGEIVTLGTPRRLVLAVKGVAERQPDAELTAMGPAKSHAYDADGNPTKAAQGFARGQGIDVSQLKLVTTEKGEYLAAVKSEIGRETAELLPEMLPRLIGNIPFKKSMRWADFDVRFARPIHWIAALFDGKVVPFSFGNIDSGSASRGHRFMANTPFPVRDLAHYLEECERHFVIPDPNKRKEIIRAEIERVAKQAKGNVLPDEALLEQVSYLVEYPSAVHGTFSPDFLVVPREVLITSMREHQRYFSLVDDEGKLLPGFITINNTITEDPQVVVKGNERVLRARLSDARFFFDEDHKVRLETRVESLKSVVYQAKLGTSYEKMERFRELGKRLAQRLNPSVIKQVERAATLCKADLVSGMVGEFPEVQGIMGREYALHDGEEPAVANAIAEHYLPTQAGGELPASDIGAFVSLADKMDTICGCFCVGLIPTGSADPYALRRSALGIINIILEKGYREPLSEFVKASLDLLAAKATRPLAEVQKDVLDFFRGRFVNLMADRFPSDAVEAVASVSFDDLVEAAAKIEALAGFRNRDDFGPLAVAFKRVCNIVKDGVDTPVSAELFQDAAEGELHQALTQVSGKVADALKKADYLAALTEIATLKPAVDLFFEKVMVMADDERVRQNRLALLTGIARLFASLADFSRLSP</sequence>
<proteinExistence type="inferred from homology"/>
<accession>C6E0B4</accession>
<name>SYGB_GEOSM</name>
<comment type="catalytic activity">
    <reaction evidence="1">
        <text>tRNA(Gly) + glycine + ATP = glycyl-tRNA(Gly) + AMP + diphosphate</text>
        <dbReference type="Rhea" id="RHEA:16013"/>
        <dbReference type="Rhea" id="RHEA-COMP:9664"/>
        <dbReference type="Rhea" id="RHEA-COMP:9683"/>
        <dbReference type="ChEBI" id="CHEBI:30616"/>
        <dbReference type="ChEBI" id="CHEBI:33019"/>
        <dbReference type="ChEBI" id="CHEBI:57305"/>
        <dbReference type="ChEBI" id="CHEBI:78442"/>
        <dbReference type="ChEBI" id="CHEBI:78522"/>
        <dbReference type="ChEBI" id="CHEBI:456215"/>
        <dbReference type="EC" id="6.1.1.14"/>
    </reaction>
</comment>
<comment type="subunit">
    <text evidence="1">Tetramer of two alpha and two beta subunits.</text>
</comment>
<comment type="subcellular location">
    <subcellularLocation>
        <location evidence="1">Cytoplasm</location>
    </subcellularLocation>
</comment>
<comment type="similarity">
    <text evidence="1">Belongs to the class-II aminoacyl-tRNA synthetase family.</text>
</comment>
<gene>
    <name evidence="1" type="primary">glyS</name>
    <name type="ordered locus">GM21_0656</name>
</gene>
<protein>
    <recommendedName>
        <fullName evidence="1">Glycine--tRNA ligase beta subunit</fullName>
        <ecNumber evidence="1">6.1.1.14</ecNumber>
    </recommendedName>
    <alternativeName>
        <fullName evidence="1">Glycyl-tRNA synthetase beta subunit</fullName>
        <shortName evidence="1">GlyRS</shortName>
    </alternativeName>
</protein>